<keyword id="KW-0004">4Fe-4S</keyword>
<keyword id="KW-0150">Chloroplast</keyword>
<keyword id="KW-0408">Iron</keyword>
<keyword id="KW-0411">Iron-sulfur</keyword>
<keyword id="KW-0472">Membrane</keyword>
<keyword id="KW-0479">Metal-binding</keyword>
<keyword id="KW-0520">NAD</keyword>
<keyword id="KW-0521">NADP</keyword>
<keyword id="KW-0934">Plastid</keyword>
<keyword id="KW-0618">Plastoquinone</keyword>
<keyword id="KW-0874">Quinone</keyword>
<keyword id="KW-0793">Thylakoid</keyword>
<keyword id="KW-1278">Translocase</keyword>
<keyword id="KW-0813">Transport</keyword>
<protein>
    <recommendedName>
        <fullName evidence="1">NAD(P)H-quinone oxidoreductase subunit K, chloroplastic</fullName>
        <ecNumber evidence="1">7.1.1.-</ecNumber>
    </recommendedName>
    <alternativeName>
        <fullName evidence="1">NAD(P)H dehydrogenase subunit K</fullName>
    </alternativeName>
    <alternativeName>
        <fullName evidence="1">NADH-plastoquinone oxidoreductase subunit K</fullName>
    </alternativeName>
</protein>
<gene>
    <name evidence="1" type="primary">ndhK</name>
</gene>
<proteinExistence type="inferred from homology"/>
<feature type="chain" id="PRO_0000358561" description="NAD(P)H-quinone oxidoreductase subunit K, chloroplastic">
    <location>
        <begin position="1"/>
        <end position="225"/>
    </location>
</feature>
<feature type="binding site" evidence="1">
    <location>
        <position position="43"/>
    </location>
    <ligand>
        <name>[4Fe-4S] cluster</name>
        <dbReference type="ChEBI" id="CHEBI:49883"/>
    </ligand>
</feature>
<feature type="binding site" evidence="1">
    <location>
        <position position="44"/>
    </location>
    <ligand>
        <name>[4Fe-4S] cluster</name>
        <dbReference type="ChEBI" id="CHEBI:49883"/>
    </ligand>
</feature>
<feature type="binding site" evidence="1">
    <location>
        <position position="108"/>
    </location>
    <ligand>
        <name>[4Fe-4S] cluster</name>
        <dbReference type="ChEBI" id="CHEBI:49883"/>
    </ligand>
</feature>
<feature type="binding site" evidence="1">
    <location>
        <position position="139"/>
    </location>
    <ligand>
        <name>[4Fe-4S] cluster</name>
        <dbReference type="ChEBI" id="CHEBI:49883"/>
    </ligand>
</feature>
<comment type="function">
    <text evidence="1">NDH shuttles electrons from NAD(P)H:plastoquinone, via FMN and iron-sulfur (Fe-S) centers, to quinones in the photosynthetic chain and possibly in a chloroplast respiratory chain. The immediate electron acceptor for the enzyme in this species is believed to be plastoquinone. Couples the redox reaction to proton translocation, and thus conserves the redox energy in a proton gradient.</text>
</comment>
<comment type="catalytic activity">
    <reaction evidence="1">
        <text>a plastoquinone + NADH + (n+1) H(+)(in) = a plastoquinol + NAD(+) + n H(+)(out)</text>
        <dbReference type="Rhea" id="RHEA:42608"/>
        <dbReference type="Rhea" id="RHEA-COMP:9561"/>
        <dbReference type="Rhea" id="RHEA-COMP:9562"/>
        <dbReference type="ChEBI" id="CHEBI:15378"/>
        <dbReference type="ChEBI" id="CHEBI:17757"/>
        <dbReference type="ChEBI" id="CHEBI:57540"/>
        <dbReference type="ChEBI" id="CHEBI:57945"/>
        <dbReference type="ChEBI" id="CHEBI:62192"/>
    </reaction>
</comment>
<comment type="catalytic activity">
    <reaction evidence="1">
        <text>a plastoquinone + NADPH + (n+1) H(+)(in) = a plastoquinol + NADP(+) + n H(+)(out)</text>
        <dbReference type="Rhea" id="RHEA:42612"/>
        <dbReference type="Rhea" id="RHEA-COMP:9561"/>
        <dbReference type="Rhea" id="RHEA-COMP:9562"/>
        <dbReference type="ChEBI" id="CHEBI:15378"/>
        <dbReference type="ChEBI" id="CHEBI:17757"/>
        <dbReference type="ChEBI" id="CHEBI:57783"/>
        <dbReference type="ChEBI" id="CHEBI:58349"/>
        <dbReference type="ChEBI" id="CHEBI:62192"/>
    </reaction>
</comment>
<comment type="cofactor">
    <cofactor evidence="1">
        <name>[4Fe-4S] cluster</name>
        <dbReference type="ChEBI" id="CHEBI:49883"/>
    </cofactor>
    <text evidence="1">Binds 1 [4Fe-4S] cluster.</text>
</comment>
<comment type="subunit">
    <text evidence="1">NDH is composed of at least 16 different subunits, 5 of which are encoded in the nucleus.</text>
</comment>
<comment type="subcellular location">
    <subcellularLocation>
        <location evidence="1">Plastid</location>
        <location evidence="1">Chloroplast thylakoid membrane</location>
        <topology evidence="1">Peripheral membrane protein</topology>
        <orientation evidence="1">Stromal side</orientation>
    </subcellularLocation>
</comment>
<comment type="similarity">
    <text evidence="1">Belongs to the complex I 20 kDa subunit family.</text>
</comment>
<comment type="sequence caution" evidence="2">
    <conflict type="erroneous initiation">
        <sequence resource="EMBL-CDS" id="ABI49867"/>
    </conflict>
</comment>
<organism>
    <name type="scientific">Nandina domestica</name>
    <name type="common">Heavenly bamboo</name>
    <dbReference type="NCBI Taxonomy" id="41776"/>
    <lineage>
        <taxon>Eukaryota</taxon>
        <taxon>Viridiplantae</taxon>
        <taxon>Streptophyta</taxon>
        <taxon>Embryophyta</taxon>
        <taxon>Tracheophyta</taxon>
        <taxon>Spermatophyta</taxon>
        <taxon>Magnoliopsida</taxon>
        <taxon>Ranunculales</taxon>
        <taxon>Berberidaceae</taxon>
        <taxon>Nandinoideae</taxon>
        <taxon>Nandineae</taxon>
        <taxon>Nandina</taxon>
    </lineage>
</organism>
<sequence>MNSIEFPLLDRITQNSVISTTSNDLSNWSRLSSLWPLLYGTSCCFIEFASLIGSRFDFDRYGLVPRSSPRQADLILTAGTVTMKMAPSLVRLYEQMPEPKYVIAMGACTITGGMFSTDSYSTVRGVDKLIPVDVYLPGCPPKPEAVIDAITKLRKKVSREIYEDRTGSQQETRCFTTNHKFRVGRSIHTGNYNQGLLYQSPSTSETPSETFFKYKSSVSPHELVN</sequence>
<reference key="1">
    <citation type="journal article" date="2006" name="BMC Plant Biol.">
        <title>Rapid and accurate pyrosequencing of angiosperm plastid genomes.</title>
        <authorList>
            <person name="Moore M.J."/>
            <person name="Dhingra A."/>
            <person name="Soltis P.S."/>
            <person name="Shaw R."/>
            <person name="Farmerie W.G."/>
            <person name="Folta K.M."/>
            <person name="Soltis D.E."/>
        </authorList>
    </citation>
    <scope>NUCLEOTIDE SEQUENCE [LARGE SCALE GENOMIC DNA]</scope>
</reference>
<name>NDHK_NANDO</name>
<evidence type="ECO:0000255" key="1">
    <source>
        <dbReference type="HAMAP-Rule" id="MF_01356"/>
    </source>
</evidence>
<evidence type="ECO:0000305" key="2"/>
<accession>Q09FV7</accession>
<dbReference type="EC" id="7.1.1.-" evidence="1"/>
<dbReference type="EMBL" id="DQ923117">
    <property type="protein sequence ID" value="ABI49867.1"/>
    <property type="status" value="ALT_INIT"/>
    <property type="molecule type" value="Genomic_DNA"/>
</dbReference>
<dbReference type="RefSeq" id="YP_740654.2">
    <property type="nucleotide sequence ID" value="NC_008336.1"/>
</dbReference>
<dbReference type="SMR" id="Q09FV7"/>
<dbReference type="GeneID" id="4271631"/>
<dbReference type="GO" id="GO:0009535">
    <property type="term" value="C:chloroplast thylakoid membrane"/>
    <property type="evidence" value="ECO:0007669"/>
    <property type="project" value="UniProtKB-SubCell"/>
</dbReference>
<dbReference type="GO" id="GO:0045271">
    <property type="term" value="C:respiratory chain complex I"/>
    <property type="evidence" value="ECO:0007669"/>
    <property type="project" value="TreeGrafter"/>
</dbReference>
<dbReference type="GO" id="GO:0051539">
    <property type="term" value="F:4 iron, 4 sulfur cluster binding"/>
    <property type="evidence" value="ECO:0007669"/>
    <property type="project" value="UniProtKB-KW"/>
</dbReference>
<dbReference type="GO" id="GO:0005506">
    <property type="term" value="F:iron ion binding"/>
    <property type="evidence" value="ECO:0007669"/>
    <property type="project" value="UniProtKB-UniRule"/>
</dbReference>
<dbReference type="GO" id="GO:0008137">
    <property type="term" value="F:NADH dehydrogenase (ubiquinone) activity"/>
    <property type="evidence" value="ECO:0007669"/>
    <property type="project" value="InterPro"/>
</dbReference>
<dbReference type="GO" id="GO:0048038">
    <property type="term" value="F:quinone binding"/>
    <property type="evidence" value="ECO:0007669"/>
    <property type="project" value="UniProtKB-KW"/>
</dbReference>
<dbReference type="GO" id="GO:0009060">
    <property type="term" value="P:aerobic respiration"/>
    <property type="evidence" value="ECO:0007669"/>
    <property type="project" value="TreeGrafter"/>
</dbReference>
<dbReference type="GO" id="GO:0015990">
    <property type="term" value="P:electron transport coupled proton transport"/>
    <property type="evidence" value="ECO:0007669"/>
    <property type="project" value="TreeGrafter"/>
</dbReference>
<dbReference type="GO" id="GO:0019684">
    <property type="term" value="P:photosynthesis, light reaction"/>
    <property type="evidence" value="ECO:0007669"/>
    <property type="project" value="UniProtKB-UniRule"/>
</dbReference>
<dbReference type="FunFam" id="3.40.50.12280:FF:000003">
    <property type="entry name" value="NAD(P)H-quinone oxidoreductase subunit K, chloroplastic"/>
    <property type="match status" value="1"/>
</dbReference>
<dbReference type="Gene3D" id="3.40.50.12280">
    <property type="match status" value="1"/>
</dbReference>
<dbReference type="HAMAP" id="MF_01356">
    <property type="entry name" value="NDH1_NuoB"/>
    <property type="match status" value="1"/>
</dbReference>
<dbReference type="InterPro" id="IPR006137">
    <property type="entry name" value="NADH_UbQ_OxRdtase-like_20kDa"/>
</dbReference>
<dbReference type="InterPro" id="IPR006138">
    <property type="entry name" value="NADH_UQ_OxRdtase_20Kd_su"/>
</dbReference>
<dbReference type="NCBIfam" id="TIGR01957">
    <property type="entry name" value="nuoB_fam"/>
    <property type="match status" value="1"/>
</dbReference>
<dbReference type="NCBIfam" id="NF005012">
    <property type="entry name" value="PRK06411.1"/>
    <property type="match status" value="1"/>
</dbReference>
<dbReference type="PANTHER" id="PTHR11995">
    <property type="entry name" value="NADH DEHYDROGENASE"/>
    <property type="match status" value="1"/>
</dbReference>
<dbReference type="PANTHER" id="PTHR11995:SF14">
    <property type="entry name" value="NADH DEHYDROGENASE [UBIQUINONE] IRON-SULFUR PROTEIN 7, MITOCHONDRIAL"/>
    <property type="match status" value="1"/>
</dbReference>
<dbReference type="Pfam" id="PF01058">
    <property type="entry name" value="Oxidored_q6"/>
    <property type="match status" value="1"/>
</dbReference>
<dbReference type="SUPFAM" id="SSF56770">
    <property type="entry name" value="HydA/Nqo6-like"/>
    <property type="match status" value="1"/>
</dbReference>
<dbReference type="PROSITE" id="PS01150">
    <property type="entry name" value="COMPLEX1_20K"/>
    <property type="match status" value="1"/>
</dbReference>
<geneLocation type="chloroplast"/>